<dbReference type="EMBL" id="AC244255">
    <property type="status" value="NOT_ANNOTATED_CDS"/>
    <property type="molecule type" value="Genomic_DNA"/>
</dbReference>
<dbReference type="EMBL" id="Z00020">
    <property type="protein sequence ID" value="CAA77315.1"/>
    <property type="status" value="ALT_SEQ"/>
    <property type="molecule type" value="Genomic_DNA"/>
</dbReference>
<dbReference type="PIR" id="A01890">
    <property type="entry name" value="K2HURP"/>
</dbReference>
<dbReference type="EMDB" id="EMD-0403"/>
<dbReference type="EMDB" id="EMD-0404"/>
<dbReference type="EMDB" id="EMD-23520"/>
<dbReference type="EMDB" id="EMD-43794"/>
<dbReference type="SMR" id="P06310"/>
<dbReference type="FunCoup" id="P06310">
    <property type="interactions" value="370"/>
</dbReference>
<dbReference type="DrugBank" id="DB07375">
    <property type="generic name" value="Etiocholanedione"/>
</dbReference>
<dbReference type="DrugBank" id="DB00693">
    <property type="generic name" value="Fluorescein"/>
</dbReference>
<dbReference type="IMGT_GENE-DB" id="IGKV2-30"/>
<dbReference type="BioMuta" id="IGKV2-30"/>
<dbReference type="DMDM" id="125792"/>
<dbReference type="jPOST" id="P06310"/>
<dbReference type="MassIVE" id="P06310"/>
<dbReference type="PRIDE" id="P06310"/>
<dbReference type="Ensembl" id="ENST00000468494.1">
    <property type="protein sequence ID" value="ENSP00000418138.1"/>
    <property type="gene ID" value="ENSG00000243238.1"/>
</dbReference>
<dbReference type="Ensembl" id="ENST00000632910.1">
    <property type="protein sequence ID" value="ENSP00000488685.1"/>
    <property type="gene ID" value="ENSG00000281933.1"/>
</dbReference>
<dbReference type="AGR" id="HGNC:5785"/>
<dbReference type="GeneCards" id="IGKV2-30"/>
<dbReference type="HGNC" id="HGNC:5785">
    <property type="gene designation" value="IGKV2-30"/>
</dbReference>
<dbReference type="HPA" id="ENSG00000243238">
    <property type="expression patterns" value="Tissue enhanced (intestine, lymphoid tissue, stomach)"/>
</dbReference>
<dbReference type="neXtProt" id="NX_P06310"/>
<dbReference type="OpenTargets" id="ENSG00000243238"/>
<dbReference type="VEuPathDB" id="HostDB:ENSG00000243238"/>
<dbReference type="GeneTree" id="ENSGT00940000153770"/>
<dbReference type="InParanoid" id="P06310"/>
<dbReference type="OMA" id="EPCGDIV"/>
<dbReference type="OrthoDB" id="9524647at2759"/>
<dbReference type="PAN-GO" id="P06310">
    <property type="GO annotations" value="3 GO annotations based on evolutionary models"/>
</dbReference>
<dbReference type="PhylomeDB" id="P06310"/>
<dbReference type="PathwayCommons" id="P06310"/>
<dbReference type="Reactome" id="R-HSA-166663">
    <property type="pathway name" value="Initial triggering of complement"/>
</dbReference>
<dbReference type="Reactome" id="R-HSA-173623">
    <property type="pathway name" value="Classical antibody-mediated complement activation"/>
</dbReference>
<dbReference type="Reactome" id="R-HSA-198933">
    <property type="pathway name" value="Immunoregulatory interactions between a Lymphoid and a non-Lymphoid cell"/>
</dbReference>
<dbReference type="Reactome" id="R-HSA-202733">
    <property type="pathway name" value="Cell surface interactions at the vascular wall"/>
</dbReference>
<dbReference type="Reactome" id="R-HSA-2029481">
    <property type="pathway name" value="FCGR activation"/>
</dbReference>
<dbReference type="Reactome" id="R-HSA-2029482">
    <property type="pathway name" value="Regulation of actin dynamics for phagocytic cup formation"/>
</dbReference>
<dbReference type="Reactome" id="R-HSA-2029485">
    <property type="pathway name" value="Role of phospholipids in phagocytosis"/>
</dbReference>
<dbReference type="Reactome" id="R-HSA-2168880">
    <property type="pathway name" value="Scavenging of heme from plasma"/>
</dbReference>
<dbReference type="Reactome" id="R-HSA-2454202">
    <property type="pathway name" value="Fc epsilon receptor (FCERI) signaling"/>
</dbReference>
<dbReference type="Reactome" id="R-HSA-2730905">
    <property type="pathway name" value="Role of LAT2/NTAL/LAB on calcium mobilization"/>
</dbReference>
<dbReference type="Reactome" id="R-HSA-2871796">
    <property type="pathway name" value="FCERI mediated MAPK activation"/>
</dbReference>
<dbReference type="Reactome" id="R-HSA-2871809">
    <property type="pathway name" value="FCERI mediated Ca+2 mobilization"/>
</dbReference>
<dbReference type="Reactome" id="R-HSA-2871837">
    <property type="pathway name" value="FCERI mediated NF-kB activation"/>
</dbReference>
<dbReference type="Reactome" id="R-HSA-5690714">
    <property type="pathway name" value="CD22 mediated BCR regulation"/>
</dbReference>
<dbReference type="Reactome" id="R-HSA-9664323">
    <property type="pathway name" value="FCGR3A-mediated IL10 synthesis"/>
</dbReference>
<dbReference type="Reactome" id="R-HSA-9664422">
    <property type="pathway name" value="FCGR3A-mediated phagocytosis"/>
</dbReference>
<dbReference type="Reactome" id="R-HSA-9679191">
    <property type="pathway name" value="Potential therapeutics for SARS"/>
</dbReference>
<dbReference type="Reactome" id="R-HSA-977606">
    <property type="pathway name" value="Regulation of Complement cascade"/>
</dbReference>
<dbReference type="Reactome" id="R-HSA-983695">
    <property type="pathway name" value="Antigen activates B Cell Receptor (BCR) leading to generation of second messengers"/>
</dbReference>
<dbReference type="SignaLink" id="P06310"/>
<dbReference type="Pharos" id="P06310">
    <property type="development level" value="Tdark"/>
</dbReference>
<dbReference type="PRO" id="PR:P06310"/>
<dbReference type="Proteomes" id="UP000005640">
    <property type="component" value="Chromosome 2"/>
</dbReference>
<dbReference type="RNAct" id="P06310">
    <property type="molecule type" value="protein"/>
</dbReference>
<dbReference type="Bgee" id="ENSG00000243238">
    <property type="expression patterns" value="Expressed in duodenum and 92 other cell types or tissues"/>
</dbReference>
<dbReference type="GO" id="GO:0072562">
    <property type="term" value="C:blood microparticle"/>
    <property type="evidence" value="ECO:0007005"/>
    <property type="project" value="UniProtKB"/>
</dbReference>
<dbReference type="GO" id="GO:0070062">
    <property type="term" value="C:extracellular exosome"/>
    <property type="evidence" value="ECO:0007005"/>
    <property type="project" value="UniProtKB"/>
</dbReference>
<dbReference type="GO" id="GO:0005576">
    <property type="term" value="C:extracellular region"/>
    <property type="evidence" value="ECO:0000304"/>
    <property type="project" value="Reactome"/>
</dbReference>
<dbReference type="GO" id="GO:0019814">
    <property type="term" value="C:immunoglobulin complex"/>
    <property type="evidence" value="ECO:0000318"/>
    <property type="project" value="GO_Central"/>
</dbReference>
<dbReference type="GO" id="GO:0005886">
    <property type="term" value="C:plasma membrane"/>
    <property type="evidence" value="ECO:0000304"/>
    <property type="project" value="Reactome"/>
</dbReference>
<dbReference type="GO" id="GO:0003823">
    <property type="term" value="F:antigen binding"/>
    <property type="evidence" value="ECO:0000303"/>
    <property type="project" value="UniProtKB"/>
</dbReference>
<dbReference type="GO" id="GO:0002250">
    <property type="term" value="P:adaptive immune response"/>
    <property type="evidence" value="ECO:0007669"/>
    <property type="project" value="UniProtKB-KW"/>
</dbReference>
<dbReference type="GO" id="GO:0006955">
    <property type="term" value="P:immune response"/>
    <property type="evidence" value="ECO:0000318"/>
    <property type="project" value="GO_Central"/>
</dbReference>
<dbReference type="FunFam" id="2.60.40.10:FF:000365">
    <property type="entry name" value="If kappa light chain"/>
    <property type="match status" value="1"/>
</dbReference>
<dbReference type="Gene3D" id="2.60.40.10">
    <property type="entry name" value="Immunoglobulins"/>
    <property type="match status" value="1"/>
</dbReference>
<dbReference type="InterPro" id="IPR007110">
    <property type="entry name" value="Ig-like_dom"/>
</dbReference>
<dbReference type="InterPro" id="IPR036179">
    <property type="entry name" value="Ig-like_dom_sf"/>
</dbReference>
<dbReference type="InterPro" id="IPR013783">
    <property type="entry name" value="Ig-like_fold"/>
</dbReference>
<dbReference type="InterPro" id="IPR013106">
    <property type="entry name" value="Ig_V-set"/>
</dbReference>
<dbReference type="InterPro" id="IPR050150">
    <property type="entry name" value="IgV_Light_Chain"/>
</dbReference>
<dbReference type="PANTHER" id="PTHR23267">
    <property type="entry name" value="IMMUNOGLOBULIN LIGHT CHAIN"/>
    <property type="match status" value="1"/>
</dbReference>
<dbReference type="Pfam" id="PF07686">
    <property type="entry name" value="V-set"/>
    <property type="match status" value="1"/>
</dbReference>
<dbReference type="SMART" id="SM00406">
    <property type="entry name" value="IGv"/>
    <property type="match status" value="1"/>
</dbReference>
<dbReference type="SUPFAM" id="SSF48726">
    <property type="entry name" value="Immunoglobulin"/>
    <property type="match status" value="1"/>
</dbReference>
<dbReference type="PROSITE" id="PS50835">
    <property type="entry name" value="IG_LIKE"/>
    <property type="match status" value="1"/>
</dbReference>
<name>KV230_HUMAN</name>
<sequence length="120" mass="13185">MRLPAQLLGLLMLWVPGSSGDVVMTQSPLSLPVTLGQPASISCRSSQSLVYSDGNTYLNWFQQRPGQSPRRLIYKVSNRDSGVPDRFSGSGSGTDFTLKISRVEAEDVGVYYCMQGTHWP</sequence>
<evidence type="ECO:0000250" key="1">
    <source>
        <dbReference type="UniProtKB" id="P01602"/>
    </source>
</evidence>
<evidence type="ECO:0000255" key="2"/>
<evidence type="ECO:0000255" key="3">
    <source>
        <dbReference type="PROSITE-ProRule" id="PRU00114"/>
    </source>
</evidence>
<evidence type="ECO:0000303" key="4">
    <source>
    </source>
</evidence>
<evidence type="ECO:0000303" key="5">
    <source>
    </source>
</evidence>
<evidence type="ECO:0000303" key="6">
    <source>
    </source>
</evidence>
<evidence type="ECO:0000303" key="7">
    <source>
    </source>
</evidence>
<evidence type="ECO:0000303" key="8">
    <source>
    </source>
</evidence>
<evidence type="ECO:0000303" key="9">
    <source ref="4"/>
</evidence>
<evidence type="ECO:0000305" key="10"/>
<evidence type="ECO:0000305" key="11">
    <source>
    </source>
</evidence>
<feature type="signal peptide" evidence="2">
    <location>
        <begin position="1"/>
        <end position="20"/>
    </location>
</feature>
<feature type="chain" id="PRO_0000015173" description="Immunoglobulin kappa variable 2-30" evidence="2">
    <location>
        <begin position="21"/>
        <end position="120"/>
    </location>
</feature>
<feature type="domain" description="Ig-like" evidence="3">
    <location>
        <begin position="21"/>
        <end position="120" status="greater than"/>
    </location>
</feature>
<feature type="region of interest" description="Framework-1" evidence="1">
    <location>
        <begin position="21"/>
        <end position="43"/>
    </location>
</feature>
<feature type="region of interest" description="Complementarity-determining-1" evidence="1">
    <location>
        <begin position="44"/>
        <end position="59"/>
    </location>
</feature>
<feature type="region of interest" description="Framework-2" evidence="1">
    <location>
        <begin position="60"/>
        <end position="74"/>
    </location>
</feature>
<feature type="region of interest" description="Complementarity-determining-2" evidence="1">
    <location>
        <begin position="75"/>
        <end position="81"/>
    </location>
</feature>
<feature type="region of interest" description="Framework-3" evidence="1">
    <location>
        <begin position="82"/>
        <end position="113"/>
    </location>
</feature>
<feature type="region of interest" description="Complementarity-determining-3" evidence="1">
    <location>
        <begin position="114"/>
        <end position="120" status="greater than"/>
    </location>
</feature>
<feature type="disulfide bond" evidence="3">
    <location>
        <begin position="43"/>
        <end position="113"/>
    </location>
</feature>
<feature type="sequence conflict" description="In Ref. 1; CAA77315." evidence="10" ref="1">
    <original>P</original>
    <variation>S</variation>
    <location>
        <position position="120"/>
    </location>
</feature>
<feature type="non-terminal residue">
    <location>
        <position position="120"/>
    </location>
</feature>
<gene>
    <name evidence="4 9" type="primary">IGKV2-30</name>
</gene>
<comment type="function">
    <text evidence="5 6 7 8">V region of the variable domain of immunoglobulin light chains that participates in the antigen recognition (PubMed:24600447). Immunoglobulins, also known as antibodies, are membrane-bound or secreted glycoproteins produced by B lymphocytes. In the recognition phase of humoral immunity, the membrane-bound immunoglobulins serve as receptors which, upon binding of a specific antigen, trigger the clonal expansion and differentiation of B lymphocytes into immunoglobulins-secreting plasma cells. Secreted immunoglobulins mediate the effector phase of humoral immunity, which results in the elimination of bound antigens (PubMed:20176268, PubMed:22158414). The antigen binding site is formed by the variable domain of one heavy chain, together with that of its associated light chain. Thus, each immunoglobulin has two antigen binding sites with remarkable affinity for a particular antigen. The variable domains are assembled by a process called V-(D)-J rearrangement and can then be subjected to somatic hypermutations which, after exposure to antigen and selection, allow affinity maturation for a particular antigen (PubMed:17576170, PubMed:20176268).</text>
</comment>
<comment type="subunit">
    <text evidence="6">Immunoglobulins are composed of two identical heavy chains and two identical light chains; disulfide-linked.</text>
</comment>
<comment type="subcellular location">
    <subcellularLocation>
        <location evidence="6 7">Secreted</location>
    </subcellularLocation>
    <subcellularLocation>
        <location evidence="6 7">Cell membrane</location>
    </subcellularLocation>
</comment>
<comment type="polymorphism">
    <text>There are several alleles. The sequence shown is that of IMGT allele IGKV2-30*01.</text>
</comment>
<comment type="caution">
    <text evidence="10">For an example of a full-length immunoglobulin kappa light chain see AC P0DOX7.</text>
</comment>
<comment type="sequence caution" evidence="10">
    <conflict type="miscellaneous discrepancy">
        <sequence resource="EMBL-CDS" id="CAA77315"/>
    </conflict>
    <text>Chimeric DNA corresponding to regions V and J of immunoglobulin kappa light chain.</text>
</comment>
<organism>
    <name type="scientific">Homo sapiens</name>
    <name type="common">Human</name>
    <dbReference type="NCBI Taxonomy" id="9606"/>
    <lineage>
        <taxon>Eukaryota</taxon>
        <taxon>Metazoa</taxon>
        <taxon>Chordata</taxon>
        <taxon>Craniata</taxon>
        <taxon>Vertebrata</taxon>
        <taxon>Euteleostomi</taxon>
        <taxon>Mammalia</taxon>
        <taxon>Eutheria</taxon>
        <taxon>Euarchontoglires</taxon>
        <taxon>Primates</taxon>
        <taxon>Haplorrhini</taxon>
        <taxon>Catarrhini</taxon>
        <taxon>Hominidae</taxon>
        <taxon>Homo</taxon>
    </lineage>
</organism>
<reference key="1">
    <citation type="journal article" date="1985" name="Nucleic Acids Res.">
        <title>Human immunoglobulin kappa light chain genes of subgroups II and III.</title>
        <authorList>
            <person name="Klobeck H.G."/>
            <person name="Meindl A."/>
            <person name="Combriato G."/>
            <person name="Solomon A."/>
            <person name="Zachau H.G."/>
        </authorList>
    </citation>
    <scope>NUCLEOTIDE SEQUENCE [GENOMIC DNA]</scope>
</reference>
<reference key="2">
    <citation type="journal article" date="2005" name="Nature">
        <title>Generation and annotation of the DNA sequences of human chromosomes 2 and 4.</title>
        <authorList>
            <person name="Hillier L.W."/>
            <person name="Graves T.A."/>
            <person name="Fulton R.S."/>
            <person name="Fulton L.A."/>
            <person name="Pepin K.H."/>
            <person name="Minx P."/>
            <person name="Wagner-McPherson C."/>
            <person name="Layman D."/>
            <person name="Wylie K."/>
            <person name="Sekhon M."/>
            <person name="Becker M.C."/>
            <person name="Fewell G.A."/>
            <person name="Delehaunty K.D."/>
            <person name="Miner T.L."/>
            <person name="Nash W.E."/>
            <person name="Kremitzki C."/>
            <person name="Oddy L."/>
            <person name="Du H."/>
            <person name="Sun H."/>
            <person name="Bradshaw-Cordum H."/>
            <person name="Ali J."/>
            <person name="Carter J."/>
            <person name="Cordes M."/>
            <person name="Harris A."/>
            <person name="Isak A."/>
            <person name="van Brunt A."/>
            <person name="Nguyen C."/>
            <person name="Du F."/>
            <person name="Courtney L."/>
            <person name="Kalicki J."/>
            <person name="Ozersky P."/>
            <person name="Abbott S."/>
            <person name="Armstrong J."/>
            <person name="Belter E.A."/>
            <person name="Caruso L."/>
            <person name="Cedroni M."/>
            <person name="Cotton M."/>
            <person name="Davidson T."/>
            <person name="Desai A."/>
            <person name="Elliott G."/>
            <person name="Erb T."/>
            <person name="Fronick C."/>
            <person name="Gaige T."/>
            <person name="Haakenson W."/>
            <person name="Haglund K."/>
            <person name="Holmes A."/>
            <person name="Harkins R."/>
            <person name="Kim K."/>
            <person name="Kruchowski S.S."/>
            <person name="Strong C.M."/>
            <person name="Grewal N."/>
            <person name="Goyea E."/>
            <person name="Hou S."/>
            <person name="Levy A."/>
            <person name="Martinka S."/>
            <person name="Mead K."/>
            <person name="McLellan M.D."/>
            <person name="Meyer R."/>
            <person name="Randall-Maher J."/>
            <person name="Tomlinson C."/>
            <person name="Dauphin-Kohlberg S."/>
            <person name="Kozlowicz-Reilly A."/>
            <person name="Shah N."/>
            <person name="Swearengen-Shahid S."/>
            <person name="Snider J."/>
            <person name="Strong J.T."/>
            <person name="Thompson J."/>
            <person name="Yoakum M."/>
            <person name="Leonard S."/>
            <person name="Pearman C."/>
            <person name="Trani L."/>
            <person name="Radionenko M."/>
            <person name="Waligorski J.E."/>
            <person name="Wang C."/>
            <person name="Rock S.M."/>
            <person name="Tin-Wollam A.-M."/>
            <person name="Maupin R."/>
            <person name="Latreille P."/>
            <person name="Wendl M.C."/>
            <person name="Yang S.-P."/>
            <person name="Pohl C."/>
            <person name="Wallis J.W."/>
            <person name="Spieth J."/>
            <person name="Bieri T.A."/>
            <person name="Berkowicz N."/>
            <person name="Nelson J.O."/>
            <person name="Osborne J."/>
            <person name="Ding L."/>
            <person name="Meyer R."/>
            <person name="Sabo A."/>
            <person name="Shotland Y."/>
            <person name="Sinha P."/>
            <person name="Wohldmann P.E."/>
            <person name="Cook L.L."/>
            <person name="Hickenbotham M.T."/>
            <person name="Eldred J."/>
            <person name="Williams D."/>
            <person name="Jones T.A."/>
            <person name="She X."/>
            <person name="Ciccarelli F.D."/>
            <person name="Izaurralde E."/>
            <person name="Taylor J."/>
            <person name="Schmutz J."/>
            <person name="Myers R.M."/>
            <person name="Cox D.R."/>
            <person name="Huang X."/>
            <person name="McPherson J.D."/>
            <person name="Mardis E.R."/>
            <person name="Clifton S.W."/>
            <person name="Warren W.C."/>
            <person name="Chinwalla A.T."/>
            <person name="Eddy S.R."/>
            <person name="Marra M.A."/>
            <person name="Ovcharenko I."/>
            <person name="Furey T.S."/>
            <person name="Miller W."/>
            <person name="Eichler E.E."/>
            <person name="Bork P."/>
            <person name="Suyama M."/>
            <person name="Torrents D."/>
            <person name="Waterston R.H."/>
            <person name="Wilson R.K."/>
        </authorList>
    </citation>
    <scope>NUCLEOTIDE SEQUENCE [LARGE SCALE GENOMIC DNA] (IMGT ALLELE IGKV2-30*01)</scope>
</reference>
<reference key="3">
    <citation type="journal article" date="2001" name="Exp. Clin. Immunogenet.">
        <title>Nomenclature of the human immunoglobulin kappa (IGK) genes.</title>
        <authorList>
            <person name="Lefranc M.P."/>
        </authorList>
    </citation>
    <scope>NOMEMCLATURE</scope>
</reference>
<reference key="4">
    <citation type="book" date="2001" name="The Immunoglobulin FactsBook.">
        <title>The Immunoglobulin FactsBook.</title>
        <editorList>
            <person name="Lefranc M.P."/>
            <person name="Lefranc G."/>
        </editorList>
        <authorList>
            <person name="Lefranc M.P."/>
            <person name="Lefranc G."/>
        </authorList>
    </citation>
    <scope>NOMENCLATURE</scope>
</reference>
<reference key="5">
    <citation type="journal article" date="2007" name="Annu. Rev. Genet.">
        <title>Immunoglobulin somatic hypermutation.</title>
        <authorList>
            <person name="Teng G."/>
            <person name="Papavasiliou F.N."/>
        </authorList>
    </citation>
    <scope>REVIEW ON SOMATIC HYPERMUTATION</scope>
</reference>
<reference key="6">
    <citation type="journal article" date="2010" name="J. Allergy Clin. Immunol.">
        <title>Structure and function of immunoglobulins.</title>
        <authorList>
            <person name="Schroeder H.W. Jr."/>
            <person name="Cavacini L."/>
        </authorList>
    </citation>
    <scope>REVIEW ON IMMUNOGLOBULINS</scope>
</reference>
<reference key="7">
    <citation type="journal article" date="2012" name="Nat. Rev. Immunol.">
        <title>Molecular programming of B cell memory.</title>
        <authorList>
            <person name="McHeyzer-Williams M."/>
            <person name="Okitsu S."/>
            <person name="Wang N."/>
            <person name="McHeyzer-Williams L."/>
        </authorList>
    </citation>
    <scope>REVIEW ON FUNCTION</scope>
</reference>
<reference key="8">
    <citation type="journal article" date="2014" name="Front. Immunol.">
        <title>Immunoglobulin and T Cell Receptor Genes: IMGT((R)) and the Birth and Rise of Immunoinformatics.</title>
        <authorList>
            <person name="Lefranc M.P."/>
        </authorList>
    </citation>
    <scope>NOMENCLATURE</scope>
</reference>
<keyword id="KW-1064">Adaptive immunity</keyword>
<keyword id="KW-1003">Cell membrane</keyword>
<keyword id="KW-1015">Disulfide bond</keyword>
<keyword id="KW-0391">Immunity</keyword>
<keyword id="KW-1280">Immunoglobulin</keyword>
<keyword id="KW-0393">Immunoglobulin domain</keyword>
<keyword id="KW-0472">Membrane</keyword>
<keyword id="KW-1267">Proteomics identification</keyword>
<keyword id="KW-1185">Reference proteome</keyword>
<keyword id="KW-0964">Secreted</keyword>
<keyword id="KW-0732">Signal</keyword>
<accession>P06310</accession>
<accession>A0A075B6S3</accession>
<proteinExistence type="evidence at protein level"/>
<protein>
    <recommendedName>
        <fullName evidence="4 9">Immunoglobulin kappa variable 2-30</fullName>
    </recommendedName>
    <alternativeName>
        <fullName evidence="11">Ig kappa chain V-II region RPMI 6410</fullName>
    </alternativeName>
</protein>